<keyword id="KW-0032">Aminotransferase</keyword>
<keyword id="KW-0663">Pyridoxal phosphate</keyword>
<keyword id="KW-0808">Transferase</keyword>
<organism>
    <name type="scientific">Mycolicibacterium vanbaalenii (strain DSM 7251 / JCM 13017 / BCRC 16820 / KCTC 9966 / NRRL B-24157 / PYR-1)</name>
    <name type="common">Mycobacterium vanbaalenii</name>
    <dbReference type="NCBI Taxonomy" id="350058"/>
    <lineage>
        <taxon>Bacteria</taxon>
        <taxon>Bacillati</taxon>
        <taxon>Actinomycetota</taxon>
        <taxon>Actinomycetes</taxon>
        <taxon>Mycobacteriales</taxon>
        <taxon>Mycobacteriaceae</taxon>
        <taxon>Mycolicibacterium</taxon>
    </lineage>
</organism>
<dbReference type="EC" id="2.6.1.57" evidence="1"/>
<dbReference type="EMBL" id="CP000511">
    <property type="protein sequence ID" value="ABM16376.1"/>
    <property type="molecule type" value="Genomic_DNA"/>
</dbReference>
<dbReference type="SMR" id="A1TGS6"/>
<dbReference type="STRING" id="350058.Mvan_5611"/>
<dbReference type="KEGG" id="mva:Mvan_5611"/>
<dbReference type="eggNOG" id="COG0079">
    <property type="taxonomic scope" value="Bacteria"/>
</dbReference>
<dbReference type="HOGENOM" id="CLU_017584_3_3_11"/>
<dbReference type="Proteomes" id="UP000009159">
    <property type="component" value="Chromosome"/>
</dbReference>
<dbReference type="GO" id="GO:0008793">
    <property type="term" value="F:aromatic-amino-acid transaminase activity"/>
    <property type="evidence" value="ECO:0007669"/>
    <property type="project" value="UniProtKB-UniRule"/>
</dbReference>
<dbReference type="GO" id="GO:0004400">
    <property type="term" value="F:histidinol-phosphate transaminase activity"/>
    <property type="evidence" value="ECO:0007669"/>
    <property type="project" value="InterPro"/>
</dbReference>
<dbReference type="GO" id="GO:0030170">
    <property type="term" value="F:pyridoxal phosphate binding"/>
    <property type="evidence" value="ECO:0007669"/>
    <property type="project" value="UniProtKB-UniRule"/>
</dbReference>
<dbReference type="GO" id="GO:0000105">
    <property type="term" value="P:L-histidine biosynthetic process"/>
    <property type="evidence" value="ECO:0007669"/>
    <property type="project" value="InterPro"/>
</dbReference>
<dbReference type="CDD" id="cd00609">
    <property type="entry name" value="AAT_like"/>
    <property type="match status" value="1"/>
</dbReference>
<dbReference type="Gene3D" id="3.90.1150.10">
    <property type="entry name" value="Aspartate Aminotransferase, domain 1"/>
    <property type="match status" value="1"/>
</dbReference>
<dbReference type="Gene3D" id="3.40.640.10">
    <property type="entry name" value="Type I PLP-dependent aspartate aminotransferase-like (Major domain)"/>
    <property type="match status" value="1"/>
</dbReference>
<dbReference type="HAMAP" id="MF_01023">
    <property type="entry name" value="HisC_aminotrans_2"/>
    <property type="match status" value="1"/>
</dbReference>
<dbReference type="HAMAP" id="MF_01513">
    <property type="entry name" value="Phe_aminotrans_2"/>
    <property type="match status" value="1"/>
</dbReference>
<dbReference type="InterPro" id="IPR001917">
    <property type="entry name" value="Aminotrans_II_pyridoxalP_BS"/>
</dbReference>
<dbReference type="InterPro" id="IPR004839">
    <property type="entry name" value="Aminotransferase_I/II_large"/>
</dbReference>
<dbReference type="InterPro" id="IPR024892">
    <property type="entry name" value="ArAT"/>
</dbReference>
<dbReference type="InterPro" id="IPR005861">
    <property type="entry name" value="HisP_aminotrans"/>
</dbReference>
<dbReference type="InterPro" id="IPR050106">
    <property type="entry name" value="HistidinolP_aminotransfase"/>
</dbReference>
<dbReference type="InterPro" id="IPR015424">
    <property type="entry name" value="PyrdxlP-dep_Trfase"/>
</dbReference>
<dbReference type="InterPro" id="IPR015421">
    <property type="entry name" value="PyrdxlP-dep_Trfase_major"/>
</dbReference>
<dbReference type="InterPro" id="IPR015422">
    <property type="entry name" value="PyrdxlP-dep_Trfase_small"/>
</dbReference>
<dbReference type="NCBIfam" id="TIGR01141">
    <property type="entry name" value="hisC"/>
    <property type="match status" value="1"/>
</dbReference>
<dbReference type="NCBIfam" id="NF002878">
    <property type="entry name" value="PRK03321.1"/>
    <property type="match status" value="1"/>
</dbReference>
<dbReference type="PANTHER" id="PTHR43643:SF3">
    <property type="entry name" value="HISTIDINOL-PHOSPHATE AMINOTRANSFERASE"/>
    <property type="match status" value="1"/>
</dbReference>
<dbReference type="PANTHER" id="PTHR43643">
    <property type="entry name" value="HISTIDINOL-PHOSPHATE AMINOTRANSFERASE 2"/>
    <property type="match status" value="1"/>
</dbReference>
<dbReference type="Pfam" id="PF00155">
    <property type="entry name" value="Aminotran_1_2"/>
    <property type="match status" value="1"/>
</dbReference>
<dbReference type="SUPFAM" id="SSF53383">
    <property type="entry name" value="PLP-dependent transferases"/>
    <property type="match status" value="1"/>
</dbReference>
<dbReference type="PROSITE" id="PS00599">
    <property type="entry name" value="AA_TRANSFER_CLASS_2"/>
    <property type="match status" value="1"/>
</dbReference>
<feature type="chain" id="PRO_1000024502" description="Aromatic amino acid aminotransferase">
    <location>
        <begin position="1"/>
        <end position="351"/>
    </location>
</feature>
<feature type="modified residue" description="N6-(pyridoxal phosphate)lysine" evidence="1">
    <location>
        <position position="215"/>
    </location>
</feature>
<reference key="1">
    <citation type="submission" date="2006-12" db="EMBL/GenBank/DDBJ databases">
        <title>Complete sequence of Mycobacterium vanbaalenii PYR-1.</title>
        <authorList>
            <consortium name="US DOE Joint Genome Institute"/>
            <person name="Copeland A."/>
            <person name="Lucas S."/>
            <person name="Lapidus A."/>
            <person name="Barry K."/>
            <person name="Detter J.C."/>
            <person name="Glavina del Rio T."/>
            <person name="Hammon N."/>
            <person name="Israni S."/>
            <person name="Dalin E."/>
            <person name="Tice H."/>
            <person name="Pitluck S."/>
            <person name="Singan V."/>
            <person name="Schmutz J."/>
            <person name="Larimer F."/>
            <person name="Land M."/>
            <person name="Hauser L."/>
            <person name="Kyrpides N."/>
            <person name="Anderson I.J."/>
            <person name="Miller C."/>
            <person name="Richardson P."/>
        </authorList>
    </citation>
    <scope>NUCLEOTIDE SEQUENCE [LARGE SCALE GENOMIC DNA]</scope>
    <source>
        <strain>DSM 7251 / JCM 13017 / BCRC 16820 / KCTC 9966 / NRRL B-24157 / PYR-1</strain>
    </source>
</reference>
<proteinExistence type="inferred from homology"/>
<sequence length="351" mass="37840">MSARLRPELADLPAYAPGKTVPGAIKIASNETVHGPLPSVRAAIEKAIDGINRYPDNGYVELRERLAKHVNFAPEYISVGCGSVSLCQQLIQITSTVGDEVLFGWRSFEIYPLQVRTAGATPVQVPLTDHTFDLDAMLAAITDRTRLIFVCNPNNPTSTVVDPDALARFVEAVPPHIMVVVDEAYVEYIRDGLAPDSFGLVRAHSNVVVLRTFSKAYGLAGLRIGYAVADPDIIAALSKVYVPFTATSVSQAAAIACLDAADELLERTDAVVAERTRVSAALREAGYDLPPSQANFVWLPLVGRAQQFAADAANSRVIVRPYGEDGVRVTIAAPHENDAFLGFARGWDGLR</sequence>
<name>PATR_MYCVP</name>
<gene>
    <name evidence="1" type="primary">pat</name>
    <name type="ordered locus">Mvan_5611</name>
</gene>
<comment type="function">
    <text evidence="1">Aminotransferase that catalyzes the conversion of aromatic amino acids and 2-oxoglutarate into corresponding aromatic oxo acids and L-glutamate.</text>
</comment>
<comment type="catalytic activity">
    <reaction evidence="1">
        <text>an aromatic L-alpha-amino acid + 2-oxoglutarate = an aromatic oxo-acid + L-glutamate</text>
        <dbReference type="Rhea" id="RHEA:17533"/>
        <dbReference type="ChEBI" id="CHEBI:16810"/>
        <dbReference type="ChEBI" id="CHEBI:29985"/>
        <dbReference type="ChEBI" id="CHEBI:73309"/>
        <dbReference type="ChEBI" id="CHEBI:84824"/>
        <dbReference type="EC" id="2.6.1.57"/>
    </reaction>
</comment>
<comment type="cofactor">
    <cofactor evidence="1">
        <name>pyridoxal 5'-phosphate</name>
        <dbReference type="ChEBI" id="CHEBI:597326"/>
    </cofactor>
</comment>
<comment type="subunit">
    <text evidence="1">Homodimer.</text>
</comment>
<comment type="similarity">
    <text evidence="1">Belongs to the class-II pyridoxal-phosphate-dependent aminotransferase family.</text>
</comment>
<evidence type="ECO:0000255" key="1">
    <source>
        <dbReference type="HAMAP-Rule" id="MF_01513"/>
    </source>
</evidence>
<protein>
    <recommendedName>
        <fullName evidence="1">Aromatic amino acid aminotransferase</fullName>
        <shortName evidence="1">ArAT</shortName>
        <ecNumber evidence="1">2.6.1.57</ecNumber>
    </recommendedName>
</protein>
<accession>A1TGS6</accession>